<reference key="1">
    <citation type="journal article" date="1998" name="Science">
        <title>Genome sequence of an obligate intracellular pathogen of humans: Chlamydia trachomatis.</title>
        <authorList>
            <person name="Stephens R.S."/>
            <person name="Kalman S."/>
            <person name="Lammel C.J."/>
            <person name="Fan J."/>
            <person name="Marathe R."/>
            <person name="Aravind L."/>
            <person name="Mitchell W.P."/>
            <person name="Olinger L."/>
            <person name="Tatusov R.L."/>
            <person name="Zhao Q."/>
            <person name="Koonin E.V."/>
            <person name="Davis R.W."/>
        </authorList>
    </citation>
    <scope>NUCLEOTIDE SEQUENCE [LARGE SCALE GENOMIC DNA]</scope>
    <source>
        <strain>ATCC VR-885 / DSM 19411 / UW-3/Cx</strain>
    </source>
</reference>
<feature type="chain" id="PRO_0000177939" description="DNA mismatch repair protein MutL">
    <location>
        <begin position="1"/>
        <end position="576"/>
    </location>
</feature>
<dbReference type="EMBL" id="AE001273">
    <property type="protein sequence ID" value="AAC68177.1"/>
    <property type="molecule type" value="Genomic_DNA"/>
</dbReference>
<dbReference type="PIR" id="A71497">
    <property type="entry name" value="A71497"/>
</dbReference>
<dbReference type="RefSeq" id="NP_220090.1">
    <property type="nucleotide sequence ID" value="NC_000117.1"/>
</dbReference>
<dbReference type="RefSeq" id="WP_009871940.1">
    <property type="nucleotide sequence ID" value="NC_000117.1"/>
</dbReference>
<dbReference type="SMR" id="O84579"/>
<dbReference type="FunCoup" id="O84579">
    <property type="interactions" value="234"/>
</dbReference>
<dbReference type="STRING" id="272561.CT_575"/>
<dbReference type="EnsemblBacteria" id="AAC68177">
    <property type="protein sequence ID" value="AAC68177"/>
    <property type="gene ID" value="CT_575"/>
</dbReference>
<dbReference type="GeneID" id="884352"/>
<dbReference type="KEGG" id="ctr:CT_575"/>
<dbReference type="PATRIC" id="fig|272561.5.peg.627"/>
<dbReference type="HOGENOM" id="CLU_004131_4_3_0"/>
<dbReference type="InParanoid" id="O84579"/>
<dbReference type="OrthoDB" id="9763467at2"/>
<dbReference type="Proteomes" id="UP000000431">
    <property type="component" value="Chromosome"/>
</dbReference>
<dbReference type="GO" id="GO:0032300">
    <property type="term" value="C:mismatch repair complex"/>
    <property type="evidence" value="ECO:0000318"/>
    <property type="project" value="GO_Central"/>
</dbReference>
<dbReference type="GO" id="GO:0005524">
    <property type="term" value="F:ATP binding"/>
    <property type="evidence" value="ECO:0007669"/>
    <property type="project" value="InterPro"/>
</dbReference>
<dbReference type="GO" id="GO:0016887">
    <property type="term" value="F:ATP hydrolysis activity"/>
    <property type="evidence" value="ECO:0000318"/>
    <property type="project" value="GO_Central"/>
</dbReference>
<dbReference type="GO" id="GO:0140664">
    <property type="term" value="F:ATP-dependent DNA damage sensor activity"/>
    <property type="evidence" value="ECO:0007669"/>
    <property type="project" value="InterPro"/>
</dbReference>
<dbReference type="GO" id="GO:0030983">
    <property type="term" value="F:mismatched DNA binding"/>
    <property type="evidence" value="ECO:0007669"/>
    <property type="project" value="InterPro"/>
</dbReference>
<dbReference type="GO" id="GO:0006298">
    <property type="term" value="P:mismatch repair"/>
    <property type="evidence" value="ECO:0000318"/>
    <property type="project" value="GO_Central"/>
</dbReference>
<dbReference type="CDD" id="cd16926">
    <property type="entry name" value="HATPase_MutL-MLH-PMS-like"/>
    <property type="match status" value="1"/>
</dbReference>
<dbReference type="CDD" id="cd00782">
    <property type="entry name" value="MutL_Trans"/>
    <property type="match status" value="1"/>
</dbReference>
<dbReference type="FunFam" id="3.30.565.10:FF:000003">
    <property type="entry name" value="DNA mismatch repair endonuclease MutL"/>
    <property type="match status" value="1"/>
</dbReference>
<dbReference type="Gene3D" id="3.30.230.10">
    <property type="match status" value="1"/>
</dbReference>
<dbReference type="Gene3D" id="3.30.565.10">
    <property type="entry name" value="Histidine kinase-like ATPase, C-terminal domain"/>
    <property type="match status" value="1"/>
</dbReference>
<dbReference type="Gene3D" id="3.30.1540.20">
    <property type="entry name" value="MutL, C-terminal domain, dimerisation subdomain"/>
    <property type="match status" value="1"/>
</dbReference>
<dbReference type="Gene3D" id="3.30.1370.100">
    <property type="entry name" value="MutL, C-terminal domain, regulatory subdomain"/>
    <property type="match status" value="1"/>
</dbReference>
<dbReference type="HAMAP" id="MF_00149">
    <property type="entry name" value="DNA_mis_repair"/>
    <property type="match status" value="1"/>
</dbReference>
<dbReference type="InterPro" id="IPR014762">
    <property type="entry name" value="DNA_mismatch_repair_CS"/>
</dbReference>
<dbReference type="InterPro" id="IPR020667">
    <property type="entry name" value="DNA_mismatch_repair_MutL"/>
</dbReference>
<dbReference type="InterPro" id="IPR013507">
    <property type="entry name" value="DNA_mismatch_S5_2-like"/>
</dbReference>
<dbReference type="InterPro" id="IPR036890">
    <property type="entry name" value="HATPase_C_sf"/>
</dbReference>
<dbReference type="InterPro" id="IPR002099">
    <property type="entry name" value="MutL/Mlh/PMS"/>
</dbReference>
<dbReference type="InterPro" id="IPR038973">
    <property type="entry name" value="MutL/Mlh/Pms-like"/>
</dbReference>
<dbReference type="InterPro" id="IPR014790">
    <property type="entry name" value="MutL_C"/>
</dbReference>
<dbReference type="InterPro" id="IPR042120">
    <property type="entry name" value="MutL_C_dimsub"/>
</dbReference>
<dbReference type="InterPro" id="IPR042121">
    <property type="entry name" value="MutL_C_regsub"/>
</dbReference>
<dbReference type="InterPro" id="IPR037198">
    <property type="entry name" value="MutL_C_sf"/>
</dbReference>
<dbReference type="InterPro" id="IPR020568">
    <property type="entry name" value="Ribosomal_Su5_D2-typ_SF"/>
</dbReference>
<dbReference type="InterPro" id="IPR014721">
    <property type="entry name" value="Ribsml_uS5_D2-typ_fold_subgr"/>
</dbReference>
<dbReference type="NCBIfam" id="TIGR00585">
    <property type="entry name" value="mutl"/>
    <property type="match status" value="1"/>
</dbReference>
<dbReference type="NCBIfam" id="NF000954">
    <property type="entry name" value="PRK00095.2-5"/>
    <property type="match status" value="1"/>
</dbReference>
<dbReference type="PANTHER" id="PTHR10073">
    <property type="entry name" value="DNA MISMATCH REPAIR PROTEIN MLH, PMS, MUTL"/>
    <property type="match status" value="1"/>
</dbReference>
<dbReference type="PANTHER" id="PTHR10073:SF12">
    <property type="entry name" value="DNA MISMATCH REPAIR PROTEIN MLH1"/>
    <property type="match status" value="1"/>
</dbReference>
<dbReference type="Pfam" id="PF01119">
    <property type="entry name" value="DNA_mis_repair"/>
    <property type="match status" value="1"/>
</dbReference>
<dbReference type="Pfam" id="PF13589">
    <property type="entry name" value="HATPase_c_3"/>
    <property type="match status" value="1"/>
</dbReference>
<dbReference type="Pfam" id="PF08676">
    <property type="entry name" value="MutL_C"/>
    <property type="match status" value="1"/>
</dbReference>
<dbReference type="SMART" id="SM01340">
    <property type="entry name" value="DNA_mis_repair"/>
    <property type="match status" value="1"/>
</dbReference>
<dbReference type="SMART" id="SM00853">
    <property type="entry name" value="MutL_C"/>
    <property type="match status" value="1"/>
</dbReference>
<dbReference type="SUPFAM" id="SSF55874">
    <property type="entry name" value="ATPase domain of HSP90 chaperone/DNA topoisomerase II/histidine kinase"/>
    <property type="match status" value="1"/>
</dbReference>
<dbReference type="SUPFAM" id="SSF118116">
    <property type="entry name" value="DNA mismatch repair protein MutL"/>
    <property type="match status" value="1"/>
</dbReference>
<dbReference type="SUPFAM" id="SSF54211">
    <property type="entry name" value="Ribosomal protein S5 domain 2-like"/>
    <property type="match status" value="1"/>
</dbReference>
<dbReference type="PROSITE" id="PS00058">
    <property type="entry name" value="DNA_MISMATCH_REPAIR_1"/>
    <property type="match status" value="1"/>
</dbReference>
<keyword id="KW-0227">DNA damage</keyword>
<keyword id="KW-0234">DNA repair</keyword>
<keyword id="KW-1185">Reference proteome</keyword>
<organism>
    <name type="scientific">Chlamydia trachomatis serovar D (strain ATCC VR-885 / DSM 19411 / UW-3/Cx)</name>
    <dbReference type="NCBI Taxonomy" id="272561"/>
    <lineage>
        <taxon>Bacteria</taxon>
        <taxon>Pseudomonadati</taxon>
        <taxon>Chlamydiota</taxon>
        <taxon>Chlamydiia</taxon>
        <taxon>Chlamydiales</taxon>
        <taxon>Chlamydiaceae</taxon>
        <taxon>Chlamydia/Chlamydophila group</taxon>
        <taxon>Chlamydia</taxon>
    </lineage>
</organism>
<sequence>MSLSPSRIRLLDSVTVNQISAGEVIENAASVVKELIENSLDAGADEIHIETLGGGRGQIVVRDNGVGMDPEEVPVALQRHATSKIAHFADIFSLASYGFRGEALPSIASISKMEIHTARAGGLGSKTLIEKGEPVCCEPAPRQQGTTIAVHSLFYNVPMRQSFQKSPQMDRLAIRRLLENSVLSSEGIGWTWISECRQELYVAKKQGFIERVALVLGESFVQEAFFIDKQQGDLRVLGFLGSPNQHRSTRQGQRLFINNRAVESSFISKKVAEAYAWMIPAQRYPIFVLKLFLPPMWCDFNVHPQKTEVRLLQEGQISNLLVEAISEALLRRSPSLEETVLKVPTEKIPIENEGISVPSIRPAIVSAPLSCPTFSQQPYLKTEMATIVSRDSASSSLSVVEKVRFLTSLGKVLLVEDSEGVHVVFVQAARKHLFYVSLLSERLESRLACQTFLLPSSVQMTKLEADFLQMRLEALTALGIELSRISPDSFAIESAPPFIQEEELKEWIVALAQEGALHVGESFEQLVENTVQKLVFSRNARAFDYAWLDILWKLGKPEKAFDGEMIRRLVLDDDFM</sequence>
<comment type="function">
    <text evidence="1">This protein is involved in the repair of mismatches in DNA. It is required for dam-dependent methyl-directed DNA mismatch repair. May act as a 'molecular matchmaker', a protein that promotes the formation of a stable complex between two or more DNA-binding proteins in an ATP-dependent manner without itself being part of a final effector complex (By similarity).</text>
</comment>
<comment type="similarity">
    <text evidence="2">Belongs to the DNA mismatch repair MutL/HexB family.</text>
</comment>
<proteinExistence type="inferred from homology"/>
<accession>O84579</accession>
<evidence type="ECO:0000250" key="1"/>
<evidence type="ECO:0000305" key="2"/>
<gene>
    <name type="primary">mutL</name>
    <name type="ordered locus">CT_575</name>
</gene>
<name>MUTL_CHLTR</name>
<protein>
    <recommendedName>
        <fullName>DNA mismatch repair protein MutL</fullName>
    </recommendedName>
</protein>